<feature type="chain" id="PRO_1000014143" description="Small ribosomal subunit protein uS7">
    <location>
        <begin position="1"/>
        <end position="156"/>
    </location>
</feature>
<organism>
    <name type="scientific">Paenarthrobacter aurescens (strain TC1)</name>
    <dbReference type="NCBI Taxonomy" id="290340"/>
    <lineage>
        <taxon>Bacteria</taxon>
        <taxon>Bacillati</taxon>
        <taxon>Actinomycetota</taxon>
        <taxon>Actinomycetes</taxon>
        <taxon>Micrococcales</taxon>
        <taxon>Micrococcaceae</taxon>
        <taxon>Paenarthrobacter</taxon>
    </lineage>
</organism>
<name>RS7_PAEAT</name>
<proteinExistence type="inferred from homology"/>
<gene>
    <name evidence="1" type="primary">rpsG</name>
    <name type="ordered locus">AAur_2954</name>
</gene>
<keyword id="KW-0687">Ribonucleoprotein</keyword>
<keyword id="KW-0689">Ribosomal protein</keyword>
<keyword id="KW-0694">RNA-binding</keyword>
<keyword id="KW-0699">rRNA-binding</keyword>
<keyword id="KW-0820">tRNA-binding</keyword>
<accession>A1R8V1</accession>
<protein>
    <recommendedName>
        <fullName evidence="1">Small ribosomal subunit protein uS7</fullName>
    </recommendedName>
    <alternativeName>
        <fullName evidence="2">30S ribosomal protein S7</fullName>
    </alternativeName>
</protein>
<evidence type="ECO:0000255" key="1">
    <source>
        <dbReference type="HAMAP-Rule" id="MF_00480"/>
    </source>
</evidence>
<evidence type="ECO:0000305" key="2"/>
<reference key="1">
    <citation type="journal article" date="2006" name="PLoS Genet.">
        <title>Secrets of soil survival revealed by the genome sequence of Arthrobacter aurescens TC1.</title>
        <authorList>
            <person name="Mongodin E.F."/>
            <person name="Shapir N."/>
            <person name="Daugherty S.C."/>
            <person name="DeBoy R.T."/>
            <person name="Emerson J.B."/>
            <person name="Shvartzbeyn A."/>
            <person name="Radune D."/>
            <person name="Vamathevan J."/>
            <person name="Riggs F."/>
            <person name="Grinberg V."/>
            <person name="Khouri H.M."/>
            <person name="Wackett L.P."/>
            <person name="Nelson K.E."/>
            <person name="Sadowsky M.J."/>
        </authorList>
    </citation>
    <scope>NUCLEOTIDE SEQUENCE [LARGE SCALE GENOMIC DNA]</scope>
    <source>
        <strain>TC1</strain>
    </source>
</reference>
<dbReference type="EMBL" id="CP000474">
    <property type="protein sequence ID" value="ABM07338.1"/>
    <property type="molecule type" value="Genomic_DNA"/>
</dbReference>
<dbReference type="RefSeq" id="WP_003803829.1">
    <property type="nucleotide sequence ID" value="NC_008711.1"/>
</dbReference>
<dbReference type="SMR" id="A1R8V1"/>
<dbReference type="STRING" id="290340.AAur_2954"/>
<dbReference type="GeneID" id="97301799"/>
<dbReference type="KEGG" id="aau:AAur_2954"/>
<dbReference type="eggNOG" id="COG0049">
    <property type="taxonomic scope" value="Bacteria"/>
</dbReference>
<dbReference type="HOGENOM" id="CLU_072226_1_1_11"/>
<dbReference type="OrthoDB" id="9807653at2"/>
<dbReference type="Proteomes" id="UP000000637">
    <property type="component" value="Chromosome"/>
</dbReference>
<dbReference type="GO" id="GO:0015935">
    <property type="term" value="C:small ribosomal subunit"/>
    <property type="evidence" value="ECO:0007669"/>
    <property type="project" value="InterPro"/>
</dbReference>
<dbReference type="GO" id="GO:0019843">
    <property type="term" value="F:rRNA binding"/>
    <property type="evidence" value="ECO:0007669"/>
    <property type="project" value="UniProtKB-UniRule"/>
</dbReference>
<dbReference type="GO" id="GO:0003735">
    <property type="term" value="F:structural constituent of ribosome"/>
    <property type="evidence" value="ECO:0007669"/>
    <property type="project" value="InterPro"/>
</dbReference>
<dbReference type="GO" id="GO:0000049">
    <property type="term" value="F:tRNA binding"/>
    <property type="evidence" value="ECO:0007669"/>
    <property type="project" value="UniProtKB-UniRule"/>
</dbReference>
<dbReference type="GO" id="GO:0006412">
    <property type="term" value="P:translation"/>
    <property type="evidence" value="ECO:0007669"/>
    <property type="project" value="UniProtKB-UniRule"/>
</dbReference>
<dbReference type="CDD" id="cd14869">
    <property type="entry name" value="uS7_Bacteria"/>
    <property type="match status" value="1"/>
</dbReference>
<dbReference type="FunFam" id="1.10.455.10:FF:000001">
    <property type="entry name" value="30S ribosomal protein S7"/>
    <property type="match status" value="1"/>
</dbReference>
<dbReference type="Gene3D" id="1.10.455.10">
    <property type="entry name" value="Ribosomal protein S7 domain"/>
    <property type="match status" value="1"/>
</dbReference>
<dbReference type="HAMAP" id="MF_00480_B">
    <property type="entry name" value="Ribosomal_uS7_B"/>
    <property type="match status" value="1"/>
</dbReference>
<dbReference type="InterPro" id="IPR000235">
    <property type="entry name" value="Ribosomal_uS7"/>
</dbReference>
<dbReference type="InterPro" id="IPR005717">
    <property type="entry name" value="Ribosomal_uS7_bac/org-type"/>
</dbReference>
<dbReference type="InterPro" id="IPR020606">
    <property type="entry name" value="Ribosomal_uS7_CS"/>
</dbReference>
<dbReference type="InterPro" id="IPR023798">
    <property type="entry name" value="Ribosomal_uS7_dom"/>
</dbReference>
<dbReference type="InterPro" id="IPR036823">
    <property type="entry name" value="Ribosomal_uS7_dom_sf"/>
</dbReference>
<dbReference type="NCBIfam" id="TIGR01029">
    <property type="entry name" value="rpsG_bact"/>
    <property type="match status" value="1"/>
</dbReference>
<dbReference type="PANTHER" id="PTHR11205">
    <property type="entry name" value="RIBOSOMAL PROTEIN S7"/>
    <property type="match status" value="1"/>
</dbReference>
<dbReference type="Pfam" id="PF00177">
    <property type="entry name" value="Ribosomal_S7"/>
    <property type="match status" value="1"/>
</dbReference>
<dbReference type="PIRSF" id="PIRSF002122">
    <property type="entry name" value="RPS7p_RPS7a_RPS5e_RPS7o"/>
    <property type="match status" value="1"/>
</dbReference>
<dbReference type="SUPFAM" id="SSF47973">
    <property type="entry name" value="Ribosomal protein S7"/>
    <property type="match status" value="1"/>
</dbReference>
<dbReference type="PROSITE" id="PS00052">
    <property type="entry name" value="RIBOSOMAL_S7"/>
    <property type="match status" value="1"/>
</dbReference>
<sequence>MPRKGPAPKRPLVSDPVYGSPLVTQLINKVLVDGKKSTAERIVYGALEGARAKSGGDPVAALKKAMDNVKPSLEVRSRRVGGATYQVPVEVKPGRSTALALRWLVGYSKARREKTMTERLQNEILDASNGLGAAVKRREDTHKMAESNKAFAHYRW</sequence>
<comment type="function">
    <text evidence="1">One of the primary rRNA binding proteins, it binds directly to 16S rRNA where it nucleates assembly of the head domain of the 30S subunit. Is located at the subunit interface close to the decoding center, probably blocks exit of the E-site tRNA.</text>
</comment>
<comment type="subunit">
    <text evidence="1">Part of the 30S ribosomal subunit. Contacts proteins S9 and S11.</text>
</comment>
<comment type="similarity">
    <text evidence="1">Belongs to the universal ribosomal protein uS7 family.</text>
</comment>